<feature type="chain" id="PRO_0000200407" description="Cytochrome b559 subunit beta">
    <location>
        <begin position="1"/>
        <end position="39"/>
    </location>
</feature>
<feature type="transmembrane region" description="Helical" evidence="1">
    <location>
        <begin position="14"/>
        <end position="30"/>
    </location>
</feature>
<feature type="binding site" description="axial binding residue" evidence="1">
    <location>
        <position position="18"/>
    </location>
    <ligand>
        <name>heme</name>
        <dbReference type="ChEBI" id="CHEBI:30413"/>
        <note>ligand shared with alpha subunit</note>
    </ligand>
    <ligandPart>
        <name>Fe</name>
        <dbReference type="ChEBI" id="CHEBI:18248"/>
    </ligandPart>
</feature>
<keyword id="KW-0150">Chloroplast</keyword>
<keyword id="KW-0249">Electron transport</keyword>
<keyword id="KW-0349">Heme</keyword>
<keyword id="KW-0408">Iron</keyword>
<keyword id="KW-0472">Membrane</keyword>
<keyword id="KW-0479">Metal-binding</keyword>
<keyword id="KW-0602">Photosynthesis</keyword>
<keyword id="KW-0604">Photosystem II</keyword>
<keyword id="KW-0934">Plastid</keyword>
<keyword id="KW-0793">Thylakoid</keyword>
<keyword id="KW-0812">Transmembrane</keyword>
<keyword id="KW-1133">Transmembrane helix</keyword>
<keyword id="KW-0813">Transport</keyword>
<gene>
    <name evidence="1" type="primary">psbF</name>
</gene>
<name>PSBF_IPOOB</name>
<reference key="1">
    <citation type="journal article" date="2002" name="Am. J. Bot.">
        <title>Monophyly of the Convolvulaceae and circumscription of their major lineages based on DNA sequences of multiple chloroplast loci.</title>
        <authorList>
            <person name="Stefanovic S."/>
            <person name="Krueger L."/>
            <person name="Olmstead R.G."/>
        </authorList>
        <dbReference type="AGRICOLA" id="IND23320510"/>
    </citation>
    <scope>NUCLEOTIDE SEQUENCE [GENOMIC DNA]</scope>
</reference>
<comment type="function">
    <text evidence="1">This b-type cytochrome is tightly associated with the reaction center of photosystem II (PSII). PSII is a light-driven water:plastoquinone oxidoreductase that uses light energy to abstract electrons from H(2)O, generating O(2) and a proton gradient subsequently used for ATP formation. It consists of a core antenna complex that captures photons, and an electron transfer chain that converts photonic excitation into a charge separation.</text>
</comment>
<comment type="cofactor">
    <cofactor evidence="1">
        <name>heme b</name>
        <dbReference type="ChEBI" id="CHEBI:60344"/>
    </cofactor>
    <text evidence="1">With its partner (PsbE) binds heme. PSII binds additional chlorophylls, carotenoids and specific lipids.</text>
</comment>
<comment type="subunit">
    <text evidence="1">Heterodimer of an alpha subunit and a beta subunit. PSII is composed of 1 copy each of membrane proteins PsbA, PsbB, PsbC, PsbD, PsbE, PsbF, PsbH, PsbI, PsbJ, PsbK, PsbL, PsbM, PsbT, PsbX, PsbY, PsbZ, Psb30/Ycf12, at least 3 peripheral proteins of the oxygen-evolving complex and a large number of cofactors. It forms dimeric complexes.</text>
</comment>
<comment type="subcellular location">
    <subcellularLocation>
        <location evidence="1">Plastid</location>
        <location evidence="1">Chloroplast thylakoid membrane</location>
        <topology evidence="1">Single-pass membrane protein</topology>
    </subcellularLocation>
</comment>
<comment type="similarity">
    <text evidence="1">Belongs to the PsbE/PsbF family.</text>
</comment>
<sequence>MTIDRTYPIFTVRWLAVHGLAVPTVFFLGSISAMQFIQR</sequence>
<organism>
    <name type="scientific">Ipomoea obscura</name>
    <name type="common">Obscure morning glory</name>
    <name type="synonym">Convolvulus obscurus</name>
    <dbReference type="NCBI Taxonomy" id="89652"/>
    <lineage>
        <taxon>Eukaryota</taxon>
        <taxon>Viridiplantae</taxon>
        <taxon>Streptophyta</taxon>
        <taxon>Embryophyta</taxon>
        <taxon>Tracheophyta</taxon>
        <taxon>Spermatophyta</taxon>
        <taxon>Magnoliopsida</taxon>
        <taxon>eudicotyledons</taxon>
        <taxon>Gunneridae</taxon>
        <taxon>Pentapetalae</taxon>
        <taxon>asterids</taxon>
        <taxon>lamiids</taxon>
        <taxon>Solanales</taxon>
        <taxon>Convolvulaceae</taxon>
        <taxon>Ipomoeeae</taxon>
        <taxon>Ipomoea</taxon>
    </lineage>
</organism>
<accession>Q7H8I8</accession>
<geneLocation type="chloroplast"/>
<evidence type="ECO:0000255" key="1">
    <source>
        <dbReference type="HAMAP-Rule" id="MF_00643"/>
    </source>
</evidence>
<dbReference type="EMBL" id="AY100866">
    <property type="protein sequence ID" value="AAM55586.1"/>
    <property type="molecule type" value="Genomic_DNA"/>
</dbReference>
<dbReference type="SMR" id="Q7H8I8"/>
<dbReference type="GO" id="GO:0009535">
    <property type="term" value="C:chloroplast thylakoid membrane"/>
    <property type="evidence" value="ECO:0007669"/>
    <property type="project" value="UniProtKB-SubCell"/>
</dbReference>
<dbReference type="GO" id="GO:0009539">
    <property type="term" value="C:photosystem II reaction center"/>
    <property type="evidence" value="ECO:0007669"/>
    <property type="project" value="InterPro"/>
</dbReference>
<dbReference type="GO" id="GO:0009055">
    <property type="term" value="F:electron transfer activity"/>
    <property type="evidence" value="ECO:0007669"/>
    <property type="project" value="UniProtKB-UniRule"/>
</dbReference>
<dbReference type="GO" id="GO:0020037">
    <property type="term" value="F:heme binding"/>
    <property type="evidence" value="ECO:0007669"/>
    <property type="project" value="InterPro"/>
</dbReference>
<dbReference type="GO" id="GO:0005506">
    <property type="term" value="F:iron ion binding"/>
    <property type="evidence" value="ECO:0007669"/>
    <property type="project" value="UniProtKB-UniRule"/>
</dbReference>
<dbReference type="GO" id="GO:0009767">
    <property type="term" value="P:photosynthetic electron transport chain"/>
    <property type="evidence" value="ECO:0007669"/>
    <property type="project" value="InterPro"/>
</dbReference>
<dbReference type="HAMAP" id="MF_00643">
    <property type="entry name" value="PSII_PsbF"/>
    <property type="match status" value="1"/>
</dbReference>
<dbReference type="InterPro" id="IPR006241">
    <property type="entry name" value="PSII_cyt_b559_bsu"/>
</dbReference>
<dbReference type="InterPro" id="IPR006216">
    <property type="entry name" value="PSII_cyt_b559_CS"/>
</dbReference>
<dbReference type="InterPro" id="IPR013081">
    <property type="entry name" value="PSII_cyt_b559_N"/>
</dbReference>
<dbReference type="NCBIfam" id="TIGR01333">
    <property type="entry name" value="cyt_b559_beta"/>
    <property type="match status" value="1"/>
</dbReference>
<dbReference type="Pfam" id="PF00283">
    <property type="entry name" value="Cytochrom_B559"/>
    <property type="match status" value="1"/>
</dbReference>
<dbReference type="PIRSF" id="PIRSF000037">
    <property type="entry name" value="PsbF"/>
    <property type="match status" value="1"/>
</dbReference>
<dbReference type="SUPFAM" id="SSF161045">
    <property type="entry name" value="Cytochrome b559 subunits"/>
    <property type="match status" value="1"/>
</dbReference>
<dbReference type="PROSITE" id="PS00537">
    <property type="entry name" value="CYTOCHROME_B559"/>
    <property type="match status" value="1"/>
</dbReference>
<proteinExistence type="inferred from homology"/>
<protein>
    <recommendedName>
        <fullName evidence="1">Cytochrome b559 subunit beta</fullName>
    </recommendedName>
    <alternativeName>
        <fullName evidence="1">PSII reaction center subunit VI</fullName>
    </alternativeName>
</protein>